<dbReference type="EMBL" id="CP000241">
    <property type="protein sequence ID" value="ABF85206.1"/>
    <property type="molecule type" value="Genomic_DNA"/>
</dbReference>
<dbReference type="RefSeq" id="WP_001171737.1">
    <property type="nucleotide sequence ID" value="NC_008086.1"/>
</dbReference>
<dbReference type="SMR" id="Q1CS66"/>
<dbReference type="KEGG" id="hpa:HPAG1_1139"/>
<dbReference type="HOGENOM" id="CLU_092227_2_2_7"/>
<dbReference type="GO" id="GO:0015934">
    <property type="term" value="C:large ribosomal subunit"/>
    <property type="evidence" value="ECO:0007669"/>
    <property type="project" value="InterPro"/>
</dbReference>
<dbReference type="GO" id="GO:0070180">
    <property type="term" value="F:large ribosomal subunit rRNA binding"/>
    <property type="evidence" value="ECO:0007669"/>
    <property type="project" value="UniProtKB-UniRule"/>
</dbReference>
<dbReference type="GO" id="GO:0003735">
    <property type="term" value="F:structural constituent of ribosome"/>
    <property type="evidence" value="ECO:0007669"/>
    <property type="project" value="InterPro"/>
</dbReference>
<dbReference type="GO" id="GO:0006412">
    <property type="term" value="P:translation"/>
    <property type="evidence" value="ECO:0007669"/>
    <property type="project" value="UniProtKB-UniRule"/>
</dbReference>
<dbReference type="CDD" id="cd05797">
    <property type="entry name" value="Ribosomal_L10"/>
    <property type="match status" value="1"/>
</dbReference>
<dbReference type="FunFam" id="3.30.70.1730:FF:000009">
    <property type="entry name" value="50S ribosomal protein L10"/>
    <property type="match status" value="1"/>
</dbReference>
<dbReference type="Gene3D" id="3.30.70.1730">
    <property type="match status" value="1"/>
</dbReference>
<dbReference type="HAMAP" id="MF_00362">
    <property type="entry name" value="Ribosomal_uL10"/>
    <property type="match status" value="1"/>
</dbReference>
<dbReference type="InterPro" id="IPR001790">
    <property type="entry name" value="Ribosomal_uL10"/>
</dbReference>
<dbReference type="InterPro" id="IPR043141">
    <property type="entry name" value="Ribosomal_uL10-like_sf"/>
</dbReference>
<dbReference type="InterPro" id="IPR022973">
    <property type="entry name" value="Ribosomal_uL10_bac"/>
</dbReference>
<dbReference type="InterPro" id="IPR047865">
    <property type="entry name" value="Ribosomal_uL10_bac_type"/>
</dbReference>
<dbReference type="InterPro" id="IPR002363">
    <property type="entry name" value="Ribosomal_uL10_CS_bac"/>
</dbReference>
<dbReference type="NCBIfam" id="NF000955">
    <property type="entry name" value="PRK00099.1-1"/>
    <property type="match status" value="1"/>
</dbReference>
<dbReference type="PANTHER" id="PTHR11560">
    <property type="entry name" value="39S RIBOSOMAL PROTEIN L10, MITOCHONDRIAL"/>
    <property type="match status" value="1"/>
</dbReference>
<dbReference type="Pfam" id="PF00466">
    <property type="entry name" value="Ribosomal_L10"/>
    <property type="match status" value="1"/>
</dbReference>
<dbReference type="SUPFAM" id="SSF160369">
    <property type="entry name" value="Ribosomal protein L10-like"/>
    <property type="match status" value="1"/>
</dbReference>
<dbReference type="PROSITE" id="PS01109">
    <property type="entry name" value="RIBOSOMAL_L10"/>
    <property type="match status" value="1"/>
</dbReference>
<name>RL10_HELPH</name>
<keyword id="KW-0687">Ribonucleoprotein</keyword>
<keyword id="KW-0689">Ribosomal protein</keyword>
<keyword id="KW-0694">RNA-binding</keyword>
<keyword id="KW-0699">rRNA-binding</keyword>
<sequence length="164" mass="18664">MQKQHQRQHKVELVANLKSQFADAKALLICDYKGLSVRKLEALRNKARNQGIKVQVIKNTLAHIAMKETGYSDLDLKETNVFLWGDDQIALSKLVFDFQKEHKDHFVLKAGLFDKESVSVAHVEAVSKLPSKEELMGMLLSVWTAPARYFVTGLDNLRKAKEEN</sequence>
<comment type="function">
    <text evidence="1">Forms part of the ribosomal stalk, playing a central role in the interaction of the ribosome with GTP-bound translation factors.</text>
</comment>
<comment type="subunit">
    <text evidence="1">Part of the ribosomal stalk of the 50S ribosomal subunit. The N-terminus interacts with L11 and the large rRNA to form the base of the stalk. The C-terminus forms an elongated spine to which L12 dimers bind in a sequential fashion forming a multimeric L10(L12)X complex.</text>
</comment>
<comment type="similarity">
    <text evidence="1">Belongs to the universal ribosomal protein uL10 family.</text>
</comment>
<accession>Q1CS66</accession>
<protein>
    <recommendedName>
        <fullName evidence="1">Large ribosomal subunit protein uL10</fullName>
    </recommendedName>
    <alternativeName>
        <fullName evidence="2">50S ribosomal protein L10</fullName>
    </alternativeName>
</protein>
<gene>
    <name evidence="1" type="primary">rplJ</name>
    <name type="ordered locus">HPAG1_1139</name>
</gene>
<organism>
    <name type="scientific">Helicobacter pylori (strain HPAG1)</name>
    <dbReference type="NCBI Taxonomy" id="357544"/>
    <lineage>
        <taxon>Bacteria</taxon>
        <taxon>Pseudomonadati</taxon>
        <taxon>Campylobacterota</taxon>
        <taxon>Epsilonproteobacteria</taxon>
        <taxon>Campylobacterales</taxon>
        <taxon>Helicobacteraceae</taxon>
        <taxon>Helicobacter</taxon>
    </lineage>
</organism>
<proteinExistence type="inferred from homology"/>
<feature type="chain" id="PRO_1000005510" description="Large ribosomal subunit protein uL10">
    <location>
        <begin position="1"/>
        <end position="164"/>
    </location>
</feature>
<evidence type="ECO:0000255" key="1">
    <source>
        <dbReference type="HAMAP-Rule" id="MF_00362"/>
    </source>
</evidence>
<evidence type="ECO:0000305" key="2"/>
<reference key="1">
    <citation type="journal article" date="2006" name="Proc. Natl. Acad. Sci. U.S.A.">
        <title>The complete genome sequence of a chronic atrophic gastritis Helicobacter pylori strain: evolution during disease progression.</title>
        <authorList>
            <person name="Oh J.D."/>
            <person name="Kling-Baeckhed H."/>
            <person name="Giannakis M."/>
            <person name="Xu J."/>
            <person name="Fulton R.S."/>
            <person name="Fulton L.A."/>
            <person name="Cordum H.S."/>
            <person name="Wang C."/>
            <person name="Elliott G."/>
            <person name="Edwards J."/>
            <person name="Mardis E.R."/>
            <person name="Engstrand L.G."/>
            <person name="Gordon J.I."/>
        </authorList>
    </citation>
    <scope>NUCLEOTIDE SEQUENCE [LARGE SCALE GENOMIC DNA]</scope>
    <source>
        <strain>HPAG1</strain>
    </source>
</reference>